<comment type="function">
    <text evidence="1">Assembles around the rod to form the L-ring and probably protects the motor/basal body from shearing forces during rotation.</text>
</comment>
<comment type="subunit">
    <text evidence="1">The basal body constitutes a major portion of the flagellar organelle and consists of four rings (L,P,S, and M) mounted on a central rod.</text>
</comment>
<comment type="subcellular location">
    <subcellularLocation>
        <location evidence="1">Cell outer membrane</location>
        <topology evidence="1">Lipid-anchor</topology>
    </subcellularLocation>
    <subcellularLocation>
        <location evidence="1">Bacterial flagellum basal body</location>
    </subcellularLocation>
</comment>
<comment type="similarity">
    <text evidence="1">Belongs to the FlgH family.</text>
</comment>
<keyword id="KW-0975">Bacterial flagellum</keyword>
<keyword id="KW-0998">Cell outer membrane</keyword>
<keyword id="KW-0449">Lipoprotein</keyword>
<keyword id="KW-0472">Membrane</keyword>
<keyword id="KW-0564">Palmitate</keyword>
<keyword id="KW-1185">Reference proteome</keyword>
<keyword id="KW-0732">Signal</keyword>
<accession>A7ZKI4</accession>
<sequence length="232" mass="24615">MQKNAAHTYAISSLLVLSLTGCAWIPSTPLVQGATSAQPVPGPTPVANGSIFQSAQPINYGYQPLFEDRRPRNIGDTLTIVLQENVSASKSSSANASRDGKTNFGFDTVPRYLQGLFGNARADVEASGGNTFNGKGGANASNTFSGTLTVTVDQVLVNGNLHVVGEKQIAINQGTEFIRFSGVVNPRTISGSNTVPSTQVADARIEYVGNGYINEAQNMGWLQRFFLNLSPM</sequence>
<feature type="signal peptide" evidence="1">
    <location>
        <begin position="1"/>
        <end position="21"/>
    </location>
</feature>
<feature type="chain" id="PRO_1000060072" description="Flagellar L-ring protein">
    <location>
        <begin position="22"/>
        <end position="232"/>
    </location>
</feature>
<feature type="lipid moiety-binding region" description="N-palmitoyl cysteine" evidence="1">
    <location>
        <position position="22"/>
    </location>
</feature>
<feature type="lipid moiety-binding region" description="S-diacylglycerol cysteine" evidence="1">
    <location>
        <position position="22"/>
    </location>
</feature>
<protein>
    <recommendedName>
        <fullName evidence="1">Flagellar L-ring protein</fullName>
    </recommendedName>
    <alternativeName>
        <fullName evidence="1">Basal body L-ring protein</fullName>
    </alternativeName>
</protein>
<name>FLGH_ECO24</name>
<evidence type="ECO:0000255" key="1">
    <source>
        <dbReference type="HAMAP-Rule" id="MF_00415"/>
    </source>
</evidence>
<organism>
    <name type="scientific">Escherichia coli O139:H28 (strain E24377A / ETEC)</name>
    <dbReference type="NCBI Taxonomy" id="331111"/>
    <lineage>
        <taxon>Bacteria</taxon>
        <taxon>Pseudomonadati</taxon>
        <taxon>Pseudomonadota</taxon>
        <taxon>Gammaproteobacteria</taxon>
        <taxon>Enterobacterales</taxon>
        <taxon>Enterobacteriaceae</taxon>
        <taxon>Escherichia</taxon>
    </lineage>
</organism>
<reference key="1">
    <citation type="journal article" date="2008" name="J. Bacteriol.">
        <title>The pangenome structure of Escherichia coli: comparative genomic analysis of E. coli commensal and pathogenic isolates.</title>
        <authorList>
            <person name="Rasko D.A."/>
            <person name="Rosovitz M.J."/>
            <person name="Myers G.S.A."/>
            <person name="Mongodin E.F."/>
            <person name="Fricke W.F."/>
            <person name="Gajer P."/>
            <person name="Crabtree J."/>
            <person name="Sebaihia M."/>
            <person name="Thomson N.R."/>
            <person name="Chaudhuri R."/>
            <person name="Henderson I.R."/>
            <person name="Sperandio V."/>
            <person name="Ravel J."/>
        </authorList>
    </citation>
    <scope>NUCLEOTIDE SEQUENCE [LARGE SCALE GENOMIC DNA]</scope>
    <source>
        <strain>E24377A / ETEC</strain>
    </source>
</reference>
<dbReference type="EMBL" id="CP000800">
    <property type="protein sequence ID" value="ABV16813.1"/>
    <property type="molecule type" value="Genomic_DNA"/>
</dbReference>
<dbReference type="RefSeq" id="WP_001295442.1">
    <property type="nucleotide sequence ID" value="NC_009801.1"/>
</dbReference>
<dbReference type="SMR" id="A7ZKI4"/>
<dbReference type="GeneID" id="93776328"/>
<dbReference type="KEGG" id="ecw:EcE24377A_1202"/>
<dbReference type="HOGENOM" id="CLU_069313_0_0_6"/>
<dbReference type="Proteomes" id="UP000001122">
    <property type="component" value="Chromosome"/>
</dbReference>
<dbReference type="GO" id="GO:0009427">
    <property type="term" value="C:bacterial-type flagellum basal body, distal rod, L ring"/>
    <property type="evidence" value="ECO:0007669"/>
    <property type="project" value="InterPro"/>
</dbReference>
<dbReference type="GO" id="GO:0009279">
    <property type="term" value="C:cell outer membrane"/>
    <property type="evidence" value="ECO:0007669"/>
    <property type="project" value="UniProtKB-SubCell"/>
</dbReference>
<dbReference type="GO" id="GO:0003774">
    <property type="term" value="F:cytoskeletal motor activity"/>
    <property type="evidence" value="ECO:0007669"/>
    <property type="project" value="InterPro"/>
</dbReference>
<dbReference type="GO" id="GO:0071973">
    <property type="term" value="P:bacterial-type flagellum-dependent cell motility"/>
    <property type="evidence" value="ECO:0007669"/>
    <property type="project" value="InterPro"/>
</dbReference>
<dbReference type="HAMAP" id="MF_00415">
    <property type="entry name" value="FlgH"/>
    <property type="match status" value="1"/>
</dbReference>
<dbReference type="InterPro" id="IPR000527">
    <property type="entry name" value="Flag_Lring"/>
</dbReference>
<dbReference type="NCBIfam" id="NF001301">
    <property type="entry name" value="PRK00249.1-1"/>
    <property type="match status" value="1"/>
</dbReference>
<dbReference type="PANTHER" id="PTHR34933">
    <property type="entry name" value="FLAGELLAR L-RING PROTEIN"/>
    <property type="match status" value="1"/>
</dbReference>
<dbReference type="PANTHER" id="PTHR34933:SF3">
    <property type="entry name" value="FLAGELLAR L-RING PROTEIN"/>
    <property type="match status" value="1"/>
</dbReference>
<dbReference type="Pfam" id="PF02107">
    <property type="entry name" value="FlgH"/>
    <property type="match status" value="1"/>
</dbReference>
<dbReference type="PRINTS" id="PR01008">
    <property type="entry name" value="FLGLRINGFLGH"/>
</dbReference>
<dbReference type="PROSITE" id="PS51257">
    <property type="entry name" value="PROKAR_LIPOPROTEIN"/>
    <property type="match status" value="1"/>
</dbReference>
<proteinExistence type="inferred from homology"/>
<gene>
    <name evidence="1" type="primary">flgH</name>
    <name type="ordered locus">EcE24377A_1202</name>
</gene>